<feature type="chain" id="PRO_0000241328" description="Large ribosomal subunit protein uL3">
    <location>
        <begin position="1"/>
        <end position="217"/>
    </location>
</feature>
<feature type="region of interest" description="Disordered" evidence="2">
    <location>
        <begin position="134"/>
        <end position="154"/>
    </location>
</feature>
<feature type="compositionally biased region" description="Polar residues" evidence="2">
    <location>
        <begin position="134"/>
        <end position="146"/>
    </location>
</feature>
<feature type="modified residue" description="N5-methylglutamine" evidence="1">
    <location>
        <position position="154"/>
    </location>
</feature>
<accession>Q39KG7</accession>
<protein>
    <recommendedName>
        <fullName evidence="1">Large ribosomal subunit protein uL3</fullName>
    </recommendedName>
    <alternativeName>
        <fullName evidence="3">50S ribosomal protein L3</fullName>
    </alternativeName>
</protein>
<sequence length="217" mass="22774">MMSLGLVGRKVGMTRIFTAEGDSIPVTVLDVSDNRVTQIKTVETDGYTAVQVAFGSRRASRVTKPLAGHLAKAGVEAGEILKEFRIDAAKAAELSNGAVVGVDLFEVGQKVDVQGVSIGKGYAGTIKRYNFSSGRATHGNSRSHNVPGSIGMAQDPGRVFPGKRMTGHMGDETVTVQNLEIARIDAERKLLLVKGAIPGAKGGKVFVTPAVKTKGAK</sequence>
<dbReference type="EMBL" id="CP000151">
    <property type="protein sequence ID" value="ABB07049.1"/>
    <property type="molecule type" value="Genomic_DNA"/>
</dbReference>
<dbReference type="SMR" id="Q39KG7"/>
<dbReference type="KEGG" id="bur:Bcep18194_A3447"/>
<dbReference type="PATRIC" id="fig|482957.22.peg.288"/>
<dbReference type="HOGENOM" id="CLU_044142_4_1_4"/>
<dbReference type="Proteomes" id="UP000002705">
    <property type="component" value="Chromosome 1"/>
</dbReference>
<dbReference type="GO" id="GO:0022625">
    <property type="term" value="C:cytosolic large ribosomal subunit"/>
    <property type="evidence" value="ECO:0007669"/>
    <property type="project" value="TreeGrafter"/>
</dbReference>
<dbReference type="GO" id="GO:0019843">
    <property type="term" value="F:rRNA binding"/>
    <property type="evidence" value="ECO:0007669"/>
    <property type="project" value="UniProtKB-UniRule"/>
</dbReference>
<dbReference type="GO" id="GO:0003735">
    <property type="term" value="F:structural constituent of ribosome"/>
    <property type="evidence" value="ECO:0007669"/>
    <property type="project" value="InterPro"/>
</dbReference>
<dbReference type="GO" id="GO:0006412">
    <property type="term" value="P:translation"/>
    <property type="evidence" value="ECO:0007669"/>
    <property type="project" value="UniProtKB-UniRule"/>
</dbReference>
<dbReference type="FunFam" id="2.40.30.10:FF:000004">
    <property type="entry name" value="50S ribosomal protein L3"/>
    <property type="match status" value="1"/>
</dbReference>
<dbReference type="FunFam" id="3.30.160.810:FF:000001">
    <property type="entry name" value="50S ribosomal protein L3"/>
    <property type="match status" value="1"/>
</dbReference>
<dbReference type="Gene3D" id="3.30.160.810">
    <property type="match status" value="1"/>
</dbReference>
<dbReference type="Gene3D" id="2.40.30.10">
    <property type="entry name" value="Translation factors"/>
    <property type="match status" value="1"/>
</dbReference>
<dbReference type="HAMAP" id="MF_01325_B">
    <property type="entry name" value="Ribosomal_uL3_B"/>
    <property type="match status" value="1"/>
</dbReference>
<dbReference type="InterPro" id="IPR000597">
    <property type="entry name" value="Ribosomal_uL3"/>
</dbReference>
<dbReference type="InterPro" id="IPR019927">
    <property type="entry name" value="Ribosomal_uL3_bac/org-type"/>
</dbReference>
<dbReference type="InterPro" id="IPR019926">
    <property type="entry name" value="Ribosomal_uL3_CS"/>
</dbReference>
<dbReference type="InterPro" id="IPR009000">
    <property type="entry name" value="Transl_B-barrel_sf"/>
</dbReference>
<dbReference type="NCBIfam" id="TIGR03625">
    <property type="entry name" value="L3_bact"/>
    <property type="match status" value="1"/>
</dbReference>
<dbReference type="PANTHER" id="PTHR11229">
    <property type="entry name" value="50S RIBOSOMAL PROTEIN L3"/>
    <property type="match status" value="1"/>
</dbReference>
<dbReference type="PANTHER" id="PTHR11229:SF16">
    <property type="entry name" value="LARGE RIBOSOMAL SUBUNIT PROTEIN UL3C"/>
    <property type="match status" value="1"/>
</dbReference>
<dbReference type="Pfam" id="PF00297">
    <property type="entry name" value="Ribosomal_L3"/>
    <property type="match status" value="1"/>
</dbReference>
<dbReference type="SUPFAM" id="SSF50447">
    <property type="entry name" value="Translation proteins"/>
    <property type="match status" value="1"/>
</dbReference>
<dbReference type="PROSITE" id="PS00474">
    <property type="entry name" value="RIBOSOMAL_L3"/>
    <property type="match status" value="1"/>
</dbReference>
<organism>
    <name type="scientific">Burkholderia lata (strain ATCC 17760 / DSM 23089 / LMG 22485 / NCIMB 9086 / R18194 / 383)</name>
    <dbReference type="NCBI Taxonomy" id="482957"/>
    <lineage>
        <taxon>Bacteria</taxon>
        <taxon>Pseudomonadati</taxon>
        <taxon>Pseudomonadota</taxon>
        <taxon>Betaproteobacteria</taxon>
        <taxon>Burkholderiales</taxon>
        <taxon>Burkholderiaceae</taxon>
        <taxon>Burkholderia</taxon>
        <taxon>Burkholderia cepacia complex</taxon>
    </lineage>
</organism>
<comment type="function">
    <text evidence="1">One of the primary rRNA binding proteins, it binds directly near the 3'-end of the 23S rRNA, where it nucleates assembly of the 50S subunit.</text>
</comment>
<comment type="subunit">
    <text evidence="1">Part of the 50S ribosomal subunit. Forms a cluster with proteins L14 and L19.</text>
</comment>
<comment type="PTM">
    <text evidence="1">Methylated by PrmB.</text>
</comment>
<comment type="similarity">
    <text evidence="1">Belongs to the universal ribosomal protein uL3 family.</text>
</comment>
<gene>
    <name evidence="1" type="primary">rplC</name>
    <name type="ordered locus">Bcep18194_A3447</name>
</gene>
<evidence type="ECO:0000255" key="1">
    <source>
        <dbReference type="HAMAP-Rule" id="MF_01325"/>
    </source>
</evidence>
<evidence type="ECO:0000256" key="2">
    <source>
        <dbReference type="SAM" id="MobiDB-lite"/>
    </source>
</evidence>
<evidence type="ECO:0000305" key="3"/>
<reference key="1">
    <citation type="submission" date="2005-10" db="EMBL/GenBank/DDBJ databases">
        <title>Complete sequence of chromosome 1 of Burkholderia sp. 383.</title>
        <authorList>
            <consortium name="US DOE Joint Genome Institute"/>
            <person name="Copeland A."/>
            <person name="Lucas S."/>
            <person name="Lapidus A."/>
            <person name="Barry K."/>
            <person name="Detter J.C."/>
            <person name="Glavina T."/>
            <person name="Hammon N."/>
            <person name="Israni S."/>
            <person name="Pitluck S."/>
            <person name="Chain P."/>
            <person name="Malfatti S."/>
            <person name="Shin M."/>
            <person name="Vergez L."/>
            <person name="Schmutz J."/>
            <person name="Larimer F."/>
            <person name="Land M."/>
            <person name="Kyrpides N."/>
            <person name="Lykidis A."/>
            <person name="Richardson P."/>
        </authorList>
    </citation>
    <scope>NUCLEOTIDE SEQUENCE [LARGE SCALE GENOMIC DNA]</scope>
    <source>
        <strain>ATCC 17760 / DSM 23089 / LMG 22485 / NCIMB 9086 / R18194 / 383</strain>
    </source>
</reference>
<name>RL3_BURL3</name>
<keyword id="KW-0488">Methylation</keyword>
<keyword id="KW-0687">Ribonucleoprotein</keyword>
<keyword id="KW-0689">Ribosomal protein</keyword>
<keyword id="KW-0694">RNA-binding</keyword>
<keyword id="KW-0699">rRNA-binding</keyword>
<proteinExistence type="inferred from homology"/>